<name>BCCP_SOYBN</name>
<evidence type="ECO:0000250" key="1"/>
<evidence type="ECO:0000255" key="2">
    <source>
        <dbReference type="PROSITE-ProRule" id="PRU01066"/>
    </source>
</evidence>
<evidence type="ECO:0000256" key="3">
    <source>
        <dbReference type="SAM" id="MobiDB-lite"/>
    </source>
</evidence>
<accession>Q42783</accession>
<comment type="function">
    <text>This protein is a component of the acetyl coenzyme A carboxylase complex; first, biotin carboxylase catalyzes the carboxylation of the carrier protein and then the transcarboxylase transfers the carboxyl group to form malonyl-CoA.</text>
</comment>
<comment type="pathway">
    <text>Lipid metabolism; fatty acid biosynthesis.</text>
</comment>
<comment type="subcellular location">
    <subcellularLocation>
        <location>Plastid</location>
        <location>Chloroplast</location>
    </subcellularLocation>
</comment>
<keyword id="KW-0092">Biotin</keyword>
<keyword id="KW-0150">Chloroplast</keyword>
<keyword id="KW-0903">Direct protein sequencing</keyword>
<keyword id="KW-0275">Fatty acid biosynthesis</keyword>
<keyword id="KW-0276">Fatty acid metabolism</keyword>
<keyword id="KW-0444">Lipid biosynthesis</keyword>
<keyword id="KW-0443">Lipid metabolism</keyword>
<keyword id="KW-0934">Plastid</keyword>
<keyword id="KW-1185">Reference proteome</keyword>
<keyword id="KW-0809">Transit peptide</keyword>
<reference key="1">
    <citation type="online journal article" date="1996" name="Plant Gene Register">
        <title>Characterization of a cDNA clone encoding a BCCP subunit of acetyl-CoA carboxylase from soybean.</title>
        <authorList>
            <person name="Reverdatto S.V."/>
            <person name="Beilinson V."/>
            <person name="Neilsen N.C."/>
        </authorList>
        <locator>PGR96-040</locator>
    </citation>
    <scope>NUCLEOTIDE SEQUENCE [MRNA]</scope>
    <scope>PARTIAL PROTEIN SEQUENCE</scope>
    <source>
        <strain>cv. Resnik</strain>
    </source>
</reference>
<sequence>MASSLAPATKAATNLRLTHSLRFSPKPNNLRFATKPGNTLLCTRVKAQLNEVALDSSSNATSPPMKAKSKEEPPAKPLAEPSSSVLATQESVSQFITQVASLVKLVDSRDIVELKLKQHDVEVTIRKKEAMPQPPPAPQPSVVYSPPPPALPPPPVPASTPAPTLARATPTPTSAPAVKSAKSSLPPLKSPMAGTFYRSPAPGEPSFVKVGDKVKKGQVVCIIEAMKLMNEIEADQSGTIVEIVAEDAKSVSVDTPLFVIQP</sequence>
<feature type="transit peptide" description="Chloroplast">
    <location>
        <begin position="1"/>
        <end position="47"/>
    </location>
</feature>
<feature type="chain" id="PRO_0000002832" description="Biotin carboxyl carrier protein of acetyl-CoA carboxylase, chloroplastic">
    <location>
        <begin position="48"/>
        <end position="262"/>
    </location>
</feature>
<feature type="domain" description="Biotinyl-binding" evidence="2">
    <location>
        <begin position="185"/>
        <end position="261"/>
    </location>
</feature>
<feature type="region of interest" description="Disordered" evidence="3">
    <location>
        <begin position="53"/>
        <end position="84"/>
    </location>
</feature>
<feature type="region of interest" description="Disordered" evidence="3">
    <location>
        <begin position="125"/>
        <end position="185"/>
    </location>
</feature>
<feature type="compositionally biased region" description="Pro residues" evidence="3">
    <location>
        <begin position="132"/>
        <end position="160"/>
    </location>
</feature>
<feature type="compositionally biased region" description="Low complexity" evidence="3">
    <location>
        <begin position="161"/>
        <end position="185"/>
    </location>
</feature>
<feature type="modified residue" description="N6-biotinyllysine" evidence="1 2">
    <location>
        <position position="227"/>
    </location>
</feature>
<dbReference type="EMBL" id="U40666">
    <property type="protein sequence ID" value="AAB67836.1"/>
    <property type="molecule type" value="mRNA"/>
</dbReference>
<dbReference type="PIR" id="T06600">
    <property type="entry name" value="T06600"/>
</dbReference>
<dbReference type="RefSeq" id="NP_001238375.1">
    <property type="nucleotide sequence ID" value="NM_001251446.2"/>
</dbReference>
<dbReference type="SMR" id="Q42783"/>
<dbReference type="FunCoup" id="Q42783">
    <property type="interactions" value="1025"/>
</dbReference>
<dbReference type="STRING" id="3847.Q42783"/>
<dbReference type="PaxDb" id="3847-GLYMA18G47875.1"/>
<dbReference type="EnsemblPlants" id="KRH00943">
    <property type="protein sequence ID" value="KRH00943"/>
    <property type="gene ID" value="GLYMA_18G243500"/>
</dbReference>
<dbReference type="GeneID" id="548072"/>
<dbReference type="Gramene" id="KRH00943">
    <property type="protein sequence ID" value="KRH00943"/>
    <property type="gene ID" value="GLYMA_18G243500"/>
</dbReference>
<dbReference type="KEGG" id="gmx:548072"/>
<dbReference type="eggNOG" id="ENOG502QUI2">
    <property type="taxonomic scope" value="Eukaryota"/>
</dbReference>
<dbReference type="HOGENOM" id="CLU_016733_1_0_1"/>
<dbReference type="InParanoid" id="Q42783"/>
<dbReference type="OMA" id="WFSLEDH"/>
<dbReference type="OrthoDB" id="196847at2759"/>
<dbReference type="UniPathway" id="UPA00094"/>
<dbReference type="Proteomes" id="UP000008827">
    <property type="component" value="Chromosome 18"/>
</dbReference>
<dbReference type="GO" id="GO:0009317">
    <property type="term" value="C:acetyl-CoA carboxylase complex"/>
    <property type="evidence" value="ECO:0007669"/>
    <property type="project" value="InterPro"/>
</dbReference>
<dbReference type="GO" id="GO:0009507">
    <property type="term" value="C:chloroplast"/>
    <property type="evidence" value="ECO:0000318"/>
    <property type="project" value="GO_Central"/>
</dbReference>
<dbReference type="GO" id="GO:0003989">
    <property type="term" value="F:acetyl-CoA carboxylase activity"/>
    <property type="evidence" value="ECO:0000318"/>
    <property type="project" value="GO_Central"/>
</dbReference>
<dbReference type="GO" id="GO:0006633">
    <property type="term" value="P:fatty acid biosynthetic process"/>
    <property type="evidence" value="ECO:0000318"/>
    <property type="project" value="GO_Central"/>
</dbReference>
<dbReference type="CDD" id="cd06850">
    <property type="entry name" value="biotinyl_domain"/>
    <property type="match status" value="1"/>
</dbReference>
<dbReference type="FunFam" id="2.40.50.100:FF:000003">
    <property type="entry name" value="Acetyl-CoA carboxylase biotin carboxyl carrier protein"/>
    <property type="match status" value="1"/>
</dbReference>
<dbReference type="Gene3D" id="2.40.50.100">
    <property type="match status" value="1"/>
</dbReference>
<dbReference type="InterPro" id="IPR050537">
    <property type="entry name" value="2-oxoacid_dehydrogenase"/>
</dbReference>
<dbReference type="InterPro" id="IPR001249">
    <property type="entry name" value="AcCoA_biotinCC"/>
</dbReference>
<dbReference type="InterPro" id="IPR001882">
    <property type="entry name" value="Biotin_BS"/>
</dbReference>
<dbReference type="InterPro" id="IPR000089">
    <property type="entry name" value="Biotin_lipoyl"/>
</dbReference>
<dbReference type="InterPro" id="IPR011053">
    <property type="entry name" value="Single_hybrid_motif"/>
</dbReference>
<dbReference type="NCBIfam" id="TIGR00531">
    <property type="entry name" value="BCCP"/>
    <property type="match status" value="1"/>
</dbReference>
<dbReference type="PANTHER" id="PTHR43416:SF38">
    <property type="entry name" value="BIOTIN CARBOXYL CARRIER PROTEIN OF ACETYL-COA CARBOXYLASE 1, CHLOROPLASTIC"/>
    <property type="match status" value="1"/>
</dbReference>
<dbReference type="PANTHER" id="PTHR43416">
    <property type="entry name" value="DIHYDROLIPOYLLYSINE-RESIDUE SUCCINYLTRANSFERASE COMPONENT OF 2-OXOGLUTARATE DEHYDROGENASE COMPLEX, MITOCHONDRIAL-RELATED"/>
    <property type="match status" value="1"/>
</dbReference>
<dbReference type="Pfam" id="PF00364">
    <property type="entry name" value="Biotin_lipoyl"/>
    <property type="match status" value="1"/>
</dbReference>
<dbReference type="PRINTS" id="PR01071">
    <property type="entry name" value="ACOABIOTINCC"/>
</dbReference>
<dbReference type="SUPFAM" id="SSF51230">
    <property type="entry name" value="Single hybrid motif"/>
    <property type="match status" value="1"/>
</dbReference>
<dbReference type="PROSITE" id="PS00188">
    <property type="entry name" value="BIOTIN"/>
    <property type="match status" value="1"/>
</dbReference>
<dbReference type="PROSITE" id="PS50968">
    <property type="entry name" value="BIOTINYL_LIPOYL"/>
    <property type="match status" value="1"/>
</dbReference>
<proteinExistence type="evidence at protein level"/>
<organism>
    <name type="scientific">Glycine max</name>
    <name type="common">Soybean</name>
    <name type="synonym">Glycine hispida</name>
    <dbReference type="NCBI Taxonomy" id="3847"/>
    <lineage>
        <taxon>Eukaryota</taxon>
        <taxon>Viridiplantae</taxon>
        <taxon>Streptophyta</taxon>
        <taxon>Embryophyta</taxon>
        <taxon>Tracheophyta</taxon>
        <taxon>Spermatophyta</taxon>
        <taxon>Magnoliopsida</taxon>
        <taxon>eudicotyledons</taxon>
        <taxon>Gunneridae</taxon>
        <taxon>Pentapetalae</taxon>
        <taxon>rosids</taxon>
        <taxon>fabids</taxon>
        <taxon>Fabales</taxon>
        <taxon>Fabaceae</taxon>
        <taxon>Papilionoideae</taxon>
        <taxon>50 kb inversion clade</taxon>
        <taxon>NPAAA clade</taxon>
        <taxon>indigoferoid/millettioid clade</taxon>
        <taxon>Phaseoleae</taxon>
        <taxon>Glycine</taxon>
        <taxon>Glycine subgen. Soja</taxon>
    </lineage>
</organism>
<gene>
    <name type="primary">ACCB-1</name>
</gene>
<protein>
    <recommendedName>
        <fullName>Biotin carboxyl carrier protein of acetyl-CoA carboxylase, chloroplastic</fullName>
        <shortName>BCCP</shortName>
    </recommendedName>
</protein>